<accession>Q4FPR4</accession>
<feature type="chain" id="PRO_1000013414" description="Large ribosomal subunit protein bL34">
    <location>
        <begin position="1"/>
        <end position="44"/>
    </location>
</feature>
<feature type="region of interest" description="Disordered" evidence="2">
    <location>
        <begin position="22"/>
        <end position="44"/>
    </location>
</feature>
<keyword id="KW-1185">Reference proteome</keyword>
<keyword id="KW-0687">Ribonucleoprotein</keyword>
<keyword id="KW-0689">Ribosomal protein</keyword>
<organism>
    <name type="scientific">Psychrobacter arcticus (strain DSM 17307 / VKM B-2377 / 273-4)</name>
    <dbReference type="NCBI Taxonomy" id="259536"/>
    <lineage>
        <taxon>Bacteria</taxon>
        <taxon>Pseudomonadati</taxon>
        <taxon>Pseudomonadota</taxon>
        <taxon>Gammaproteobacteria</taxon>
        <taxon>Moraxellales</taxon>
        <taxon>Moraxellaceae</taxon>
        <taxon>Psychrobacter</taxon>
    </lineage>
</organism>
<reference key="1">
    <citation type="journal article" date="2010" name="Appl. Environ. Microbiol.">
        <title>The genome sequence of Psychrobacter arcticus 273-4, a psychroactive Siberian permafrost bacterium, reveals mechanisms for adaptation to low-temperature growth.</title>
        <authorList>
            <person name="Ayala-del-Rio H.L."/>
            <person name="Chain P.S."/>
            <person name="Grzymski J.J."/>
            <person name="Ponder M.A."/>
            <person name="Ivanova N."/>
            <person name="Bergholz P.W."/>
            <person name="Di Bartolo G."/>
            <person name="Hauser L."/>
            <person name="Land M."/>
            <person name="Bakermans C."/>
            <person name="Rodrigues D."/>
            <person name="Klappenbach J."/>
            <person name="Zarka D."/>
            <person name="Larimer F."/>
            <person name="Richardson P."/>
            <person name="Murray A."/>
            <person name="Thomashow M."/>
            <person name="Tiedje J.M."/>
        </authorList>
    </citation>
    <scope>NUCLEOTIDE SEQUENCE [LARGE SCALE GENOMIC DNA]</scope>
    <source>
        <strain>DSM 17307 / VKM B-2377 / 273-4</strain>
    </source>
</reference>
<proteinExistence type="inferred from homology"/>
<sequence>MKRTFQPSVIKRKRTHGFRARMATKKGRQVLARRRAKGRHRLTV</sequence>
<dbReference type="EMBL" id="CP000082">
    <property type="protein sequence ID" value="AAZ19994.1"/>
    <property type="molecule type" value="Genomic_DNA"/>
</dbReference>
<dbReference type="RefSeq" id="WP_007394757.1">
    <property type="nucleotide sequence ID" value="NC_007204.1"/>
</dbReference>
<dbReference type="SMR" id="Q4FPR4"/>
<dbReference type="STRING" id="259536.Psyc_2147"/>
<dbReference type="GeneID" id="84621714"/>
<dbReference type="KEGG" id="par:Psyc_2147"/>
<dbReference type="eggNOG" id="COG0230">
    <property type="taxonomic scope" value="Bacteria"/>
</dbReference>
<dbReference type="HOGENOM" id="CLU_129938_2_0_6"/>
<dbReference type="OrthoDB" id="9804164at2"/>
<dbReference type="Proteomes" id="UP000000546">
    <property type="component" value="Chromosome"/>
</dbReference>
<dbReference type="GO" id="GO:1990904">
    <property type="term" value="C:ribonucleoprotein complex"/>
    <property type="evidence" value="ECO:0007669"/>
    <property type="project" value="UniProtKB-KW"/>
</dbReference>
<dbReference type="GO" id="GO:0005840">
    <property type="term" value="C:ribosome"/>
    <property type="evidence" value="ECO:0007669"/>
    <property type="project" value="UniProtKB-KW"/>
</dbReference>
<dbReference type="GO" id="GO:0003735">
    <property type="term" value="F:structural constituent of ribosome"/>
    <property type="evidence" value="ECO:0007669"/>
    <property type="project" value="InterPro"/>
</dbReference>
<dbReference type="GO" id="GO:0006412">
    <property type="term" value="P:translation"/>
    <property type="evidence" value="ECO:0007669"/>
    <property type="project" value="UniProtKB-UniRule"/>
</dbReference>
<dbReference type="FunFam" id="1.10.287.3980:FF:000001">
    <property type="entry name" value="Mitochondrial ribosomal protein L34"/>
    <property type="match status" value="1"/>
</dbReference>
<dbReference type="Gene3D" id="1.10.287.3980">
    <property type="match status" value="1"/>
</dbReference>
<dbReference type="HAMAP" id="MF_00391">
    <property type="entry name" value="Ribosomal_bL34"/>
    <property type="match status" value="1"/>
</dbReference>
<dbReference type="InterPro" id="IPR000271">
    <property type="entry name" value="Ribosomal_bL34"/>
</dbReference>
<dbReference type="InterPro" id="IPR020939">
    <property type="entry name" value="Ribosomal_bL34_CS"/>
</dbReference>
<dbReference type="NCBIfam" id="TIGR01030">
    <property type="entry name" value="rpmH_bact"/>
    <property type="match status" value="1"/>
</dbReference>
<dbReference type="PANTHER" id="PTHR14503:SF4">
    <property type="entry name" value="LARGE RIBOSOMAL SUBUNIT PROTEIN BL34M"/>
    <property type="match status" value="1"/>
</dbReference>
<dbReference type="PANTHER" id="PTHR14503">
    <property type="entry name" value="MITOCHONDRIAL RIBOSOMAL PROTEIN 34 FAMILY MEMBER"/>
    <property type="match status" value="1"/>
</dbReference>
<dbReference type="Pfam" id="PF00468">
    <property type="entry name" value="Ribosomal_L34"/>
    <property type="match status" value="1"/>
</dbReference>
<dbReference type="PROSITE" id="PS00784">
    <property type="entry name" value="RIBOSOMAL_L34"/>
    <property type="match status" value="1"/>
</dbReference>
<protein>
    <recommendedName>
        <fullName evidence="1">Large ribosomal subunit protein bL34</fullName>
    </recommendedName>
    <alternativeName>
        <fullName evidence="3">50S ribosomal protein L34</fullName>
    </alternativeName>
</protein>
<gene>
    <name evidence="1" type="primary">rpmH</name>
    <name type="ordered locus">Psyc_2147</name>
</gene>
<name>RL34_PSYA2</name>
<evidence type="ECO:0000255" key="1">
    <source>
        <dbReference type="HAMAP-Rule" id="MF_00391"/>
    </source>
</evidence>
<evidence type="ECO:0000256" key="2">
    <source>
        <dbReference type="SAM" id="MobiDB-lite"/>
    </source>
</evidence>
<evidence type="ECO:0000305" key="3"/>
<comment type="similarity">
    <text evidence="1">Belongs to the bacterial ribosomal protein bL34 family.</text>
</comment>